<keyword id="KW-0520">NAD</keyword>
<keyword id="KW-0560">Oxidoreductase</keyword>
<keyword id="KW-1185">Reference proteome</keyword>
<keyword id="KW-0816">Tricarboxylic acid cycle</keyword>
<name>MDH_PSEPK</name>
<dbReference type="EC" id="1.1.1.37" evidence="1"/>
<dbReference type="EMBL" id="AE015451">
    <property type="protein sequence ID" value="AAN66279.1"/>
    <property type="molecule type" value="Genomic_DNA"/>
</dbReference>
<dbReference type="RefSeq" id="NP_742815.2">
    <property type="nucleotide sequence ID" value="NC_002947.4"/>
</dbReference>
<dbReference type="SMR" id="Q88Q44"/>
<dbReference type="STRING" id="160488.PP_0654"/>
<dbReference type="PaxDb" id="160488-PP_0654"/>
<dbReference type="KEGG" id="ppu:PP_0654"/>
<dbReference type="PATRIC" id="fig|160488.4.peg.699"/>
<dbReference type="eggNOG" id="COG0039">
    <property type="taxonomic scope" value="Bacteria"/>
</dbReference>
<dbReference type="HOGENOM" id="CLU_045401_2_1_6"/>
<dbReference type="OrthoDB" id="9802969at2"/>
<dbReference type="PhylomeDB" id="Q88Q44"/>
<dbReference type="Proteomes" id="UP000000556">
    <property type="component" value="Chromosome"/>
</dbReference>
<dbReference type="GO" id="GO:0004459">
    <property type="term" value="F:L-lactate dehydrogenase activity"/>
    <property type="evidence" value="ECO:0007669"/>
    <property type="project" value="TreeGrafter"/>
</dbReference>
<dbReference type="GO" id="GO:0030060">
    <property type="term" value="F:L-malate dehydrogenase (NAD+) activity"/>
    <property type="evidence" value="ECO:0007669"/>
    <property type="project" value="UniProtKB-EC"/>
</dbReference>
<dbReference type="GO" id="GO:0006089">
    <property type="term" value="P:lactate metabolic process"/>
    <property type="evidence" value="ECO:0007669"/>
    <property type="project" value="TreeGrafter"/>
</dbReference>
<dbReference type="GO" id="GO:0006099">
    <property type="term" value="P:tricarboxylic acid cycle"/>
    <property type="evidence" value="ECO:0007669"/>
    <property type="project" value="UniProtKB-KW"/>
</dbReference>
<dbReference type="CDD" id="cd01339">
    <property type="entry name" value="LDH-like_MDH"/>
    <property type="match status" value="1"/>
</dbReference>
<dbReference type="Gene3D" id="3.90.110.10">
    <property type="entry name" value="Lactate dehydrogenase/glycoside hydrolase, family 4, C-terminal"/>
    <property type="match status" value="1"/>
</dbReference>
<dbReference type="Gene3D" id="3.40.50.720">
    <property type="entry name" value="NAD(P)-binding Rossmann-like Domain"/>
    <property type="match status" value="1"/>
</dbReference>
<dbReference type="InterPro" id="IPR001557">
    <property type="entry name" value="L-lactate/malate_DH"/>
</dbReference>
<dbReference type="InterPro" id="IPR022383">
    <property type="entry name" value="Lactate/malate_DH_C"/>
</dbReference>
<dbReference type="InterPro" id="IPR001236">
    <property type="entry name" value="Lactate/malate_DH_N"/>
</dbReference>
<dbReference type="InterPro" id="IPR015955">
    <property type="entry name" value="Lactate_DH/Glyco_Ohase_4_C"/>
</dbReference>
<dbReference type="InterPro" id="IPR011275">
    <property type="entry name" value="Malate_DH_type3"/>
</dbReference>
<dbReference type="InterPro" id="IPR036291">
    <property type="entry name" value="NAD(P)-bd_dom_sf"/>
</dbReference>
<dbReference type="NCBIfam" id="NF004863">
    <property type="entry name" value="PRK06223.1"/>
    <property type="match status" value="1"/>
</dbReference>
<dbReference type="PANTHER" id="PTHR43128">
    <property type="entry name" value="L-2-HYDROXYCARBOXYLATE DEHYDROGENASE (NAD(P)(+))"/>
    <property type="match status" value="1"/>
</dbReference>
<dbReference type="PANTHER" id="PTHR43128:SF16">
    <property type="entry name" value="L-LACTATE DEHYDROGENASE"/>
    <property type="match status" value="1"/>
</dbReference>
<dbReference type="Pfam" id="PF02866">
    <property type="entry name" value="Ldh_1_C"/>
    <property type="match status" value="1"/>
</dbReference>
<dbReference type="Pfam" id="PF00056">
    <property type="entry name" value="Ldh_1_N"/>
    <property type="match status" value="1"/>
</dbReference>
<dbReference type="PIRSF" id="PIRSF000102">
    <property type="entry name" value="Lac_mal_DH"/>
    <property type="match status" value="1"/>
</dbReference>
<dbReference type="PRINTS" id="PR00086">
    <property type="entry name" value="LLDHDRGNASE"/>
</dbReference>
<dbReference type="SUPFAM" id="SSF56327">
    <property type="entry name" value="LDH C-terminal domain-like"/>
    <property type="match status" value="1"/>
</dbReference>
<dbReference type="SUPFAM" id="SSF51735">
    <property type="entry name" value="NAD(P)-binding Rossmann-fold domains"/>
    <property type="match status" value="1"/>
</dbReference>
<gene>
    <name type="primary">mdh</name>
    <name type="ordered locus">PP_0654</name>
</gene>
<comment type="function">
    <text evidence="1">Catalyzes the reversible oxidation of malate to oxaloacetate.</text>
</comment>
<comment type="catalytic activity">
    <reaction evidence="1">
        <text>(S)-malate + NAD(+) = oxaloacetate + NADH + H(+)</text>
        <dbReference type="Rhea" id="RHEA:21432"/>
        <dbReference type="ChEBI" id="CHEBI:15378"/>
        <dbReference type="ChEBI" id="CHEBI:15589"/>
        <dbReference type="ChEBI" id="CHEBI:16452"/>
        <dbReference type="ChEBI" id="CHEBI:57540"/>
        <dbReference type="ChEBI" id="CHEBI:57945"/>
        <dbReference type="EC" id="1.1.1.37"/>
    </reaction>
</comment>
<comment type="similarity">
    <text evidence="2">Belongs to the LDH/MDH superfamily.</text>
</comment>
<sequence>MDVQGELAQGKALDVWQAAVDSGSDTHVHGGAKAEMLEGSELVVITAGVPRKPGQSRQDVLSTNLPILDSIMADIKHHAPTATVLVVSNPVDVLTYRAWSVSGQGRDKVFGQAGVLDTARMKCFIAEQTGFSARDITALVLGGHGDSMVPLMRYCQIGSVPLSHFLSSEQIEQIVERTRKGGGEILGLKKTGSACDAPGVAIAQMVDAIANGRNRILPAVAILEGEYGRTDIAMGVPCVLAEKGLARIIELPLDAQEQAMFDHSADQVARDIAEMKAL</sequence>
<evidence type="ECO:0000250" key="1">
    <source>
        <dbReference type="UniProtKB" id="P61889"/>
    </source>
</evidence>
<evidence type="ECO:0000305" key="2"/>
<reference key="1">
    <citation type="journal article" date="2002" name="Environ. Microbiol.">
        <title>Complete genome sequence and comparative analysis of the metabolically versatile Pseudomonas putida KT2440.</title>
        <authorList>
            <person name="Nelson K.E."/>
            <person name="Weinel C."/>
            <person name="Paulsen I.T."/>
            <person name="Dodson R.J."/>
            <person name="Hilbert H."/>
            <person name="Martins dos Santos V.A.P."/>
            <person name="Fouts D.E."/>
            <person name="Gill S.R."/>
            <person name="Pop M."/>
            <person name="Holmes M."/>
            <person name="Brinkac L.M."/>
            <person name="Beanan M.J."/>
            <person name="DeBoy R.T."/>
            <person name="Daugherty S.C."/>
            <person name="Kolonay J.F."/>
            <person name="Madupu R."/>
            <person name="Nelson W.C."/>
            <person name="White O."/>
            <person name="Peterson J.D."/>
            <person name="Khouri H.M."/>
            <person name="Hance I."/>
            <person name="Chris Lee P."/>
            <person name="Holtzapple E.K."/>
            <person name="Scanlan D."/>
            <person name="Tran K."/>
            <person name="Moazzez A."/>
            <person name="Utterback T.R."/>
            <person name="Rizzo M."/>
            <person name="Lee K."/>
            <person name="Kosack D."/>
            <person name="Moestl D."/>
            <person name="Wedler H."/>
            <person name="Lauber J."/>
            <person name="Stjepandic D."/>
            <person name="Hoheisel J."/>
            <person name="Straetz M."/>
            <person name="Heim S."/>
            <person name="Kiewitz C."/>
            <person name="Eisen J.A."/>
            <person name="Timmis K.N."/>
            <person name="Duesterhoeft A."/>
            <person name="Tuemmler B."/>
            <person name="Fraser C.M."/>
        </authorList>
    </citation>
    <scope>NUCLEOTIDE SEQUENCE [LARGE SCALE GENOMIC DNA]</scope>
    <source>
        <strain>ATCC 47054 / DSM 6125 / CFBP 8728 / NCIMB 11950 / KT2440</strain>
    </source>
</reference>
<feature type="chain" id="PRO_0000113460" description="Probable malate dehydrogenase">
    <location>
        <begin position="1"/>
        <end position="278"/>
    </location>
</feature>
<feature type="active site" description="Proton acceptor" evidence="1">
    <location>
        <position position="144"/>
    </location>
</feature>
<feature type="binding site" evidence="1">
    <location>
        <position position="51"/>
    </location>
    <ligand>
        <name>substrate</name>
    </ligand>
</feature>
<feature type="binding site" evidence="1">
    <location>
        <position position="57"/>
    </location>
    <ligand>
        <name>substrate</name>
    </ligand>
</feature>
<feature type="binding site" evidence="1">
    <location>
        <position position="64"/>
    </location>
    <ligand>
        <name>NAD(+)</name>
        <dbReference type="ChEBI" id="CHEBI:57540"/>
    </ligand>
</feature>
<feature type="binding site" evidence="1">
    <location>
        <begin position="87"/>
        <end position="89"/>
    </location>
    <ligand>
        <name>NAD(+)</name>
        <dbReference type="ChEBI" id="CHEBI:57540"/>
    </ligand>
</feature>
<feature type="binding site" evidence="1">
    <location>
        <position position="89"/>
    </location>
    <ligand>
        <name>substrate</name>
    </ligand>
</feature>
<feature type="binding site" evidence="1">
    <location>
        <position position="120"/>
    </location>
    <ligand>
        <name>substrate</name>
    </ligand>
</feature>
<protein>
    <recommendedName>
        <fullName evidence="2">Probable malate dehydrogenase</fullName>
        <ecNumber evidence="1">1.1.1.37</ecNumber>
    </recommendedName>
</protein>
<accession>Q88Q44</accession>
<organism>
    <name type="scientific">Pseudomonas putida (strain ATCC 47054 / DSM 6125 / CFBP 8728 / NCIMB 11950 / KT2440)</name>
    <dbReference type="NCBI Taxonomy" id="160488"/>
    <lineage>
        <taxon>Bacteria</taxon>
        <taxon>Pseudomonadati</taxon>
        <taxon>Pseudomonadota</taxon>
        <taxon>Gammaproteobacteria</taxon>
        <taxon>Pseudomonadales</taxon>
        <taxon>Pseudomonadaceae</taxon>
        <taxon>Pseudomonas</taxon>
    </lineage>
</organism>
<proteinExistence type="inferred from homology"/>